<accession>U5JCC6</accession>
<protein>
    <recommendedName>
        <fullName evidence="11">3-hydroxy-3-methylglutaryl coenzyme A reductase 2-B</fullName>
        <shortName evidence="9">HMG-CoA reductase 2</shortName>
        <shortName evidence="6">Hydroxymethylglutaryl-CoA reductase</shortName>
        <shortName evidence="8 9">PgHMGR2</shortName>
        <ecNumber evidence="6">1.1.1.34</ecNumber>
    </recommendedName>
</protein>
<keyword id="KW-0256">Endoplasmic reticulum</keyword>
<keyword id="KW-0325">Glycoprotein</keyword>
<keyword id="KW-0414">Isoprene biosynthesis</keyword>
<keyword id="KW-0472">Membrane</keyword>
<keyword id="KW-0521">NADP</keyword>
<keyword id="KW-0560">Oxidoreductase</keyword>
<keyword id="KW-0812">Transmembrane</keyword>
<keyword id="KW-1133">Transmembrane helix</keyword>
<proteinExistence type="evidence at transcript level"/>
<evidence type="ECO:0000250" key="1">
    <source>
        <dbReference type="UniProtKB" id="A0A0A1C3I2"/>
    </source>
</evidence>
<evidence type="ECO:0000250" key="2">
    <source>
        <dbReference type="UniProtKB" id="P04035"/>
    </source>
</evidence>
<evidence type="ECO:0000250" key="3">
    <source>
        <dbReference type="UniProtKB" id="P14891"/>
    </source>
</evidence>
<evidence type="ECO:0000255" key="4"/>
<evidence type="ECO:0000255" key="5">
    <source>
        <dbReference type="PROSITE-ProRule" id="PRU00498"/>
    </source>
</evidence>
<evidence type="ECO:0000255" key="6">
    <source>
        <dbReference type="PROSITE-ProRule" id="PRU10003"/>
    </source>
</evidence>
<evidence type="ECO:0000303" key="7">
    <source>
    </source>
</evidence>
<evidence type="ECO:0000303" key="8">
    <source>
    </source>
</evidence>
<evidence type="ECO:0000303" key="9">
    <source ref="1"/>
</evidence>
<evidence type="ECO:0000305" key="10"/>
<evidence type="ECO:0000305" key="11">
    <source ref="1"/>
</evidence>
<gene>
    <name evidence="9" type="primary">HMGR2</name>
</gene>
<sequence length="589" mass="62906">MDVRRRPVTKTLTAGEPLKSQNQHSSSLKASDALPLPLYLTNGLFFTMFFSVMYFLLHRWREKIRNSVPLHVVTLSELAALVLLVASVIYLLGFFGIGFVQSLIRPSPDSWDILEDDNAILEEDSRCEPCAAAIDCSLPPNLKIARMVPQKHKSAFADVVEEQKQSASATIIDEDEEIINAVVAGTTPSYSLESKLGDCLKAAAIRREALQRITGKSLDGLPLDGFDYESILGQCCEMPVGYVQVPVGIAGPLLLNETEYSVPMATTEGCLVASTNRGCKAIYASGGATSVLLKDGMTRAPVVRFGSAKRAAELKFFLEDPMNFETLALVFNKSSRFGRLQGIKCAIAGKNLYMRFTCSTGDAMGMNMVSKGVQNVLDFLQNDFPDMDVMGISGNYCSDKKPAAVNWIEGRGKSVVCEAIIKEEVVKKVLKTNVAALVELNMLKNLAGSAVAGALGGFNAHASNIVSAVYVAAGQDPAQNIESSHCITMMEAVNDGKDLHISVTMPSIEVGTVGGGTQLASQSACLNLLGVKGASKESPGPNSRLLASIVAGSVLAGELSLMSALAAGQLVKSHMKFNRSSKDVSKLSS</sequence>
<feature type="chain" id="PRO_0000446948" description="3-hydroxy-3-methylglutaryl coenzyme A reductase 2-B">
    <location>
        <begin position="1"/>
        <end position="589"/>
    </location>
</feature>
<feature type="topological domain" description="Lumenal" evidence="10">
    <location>
        <begin position="1"/>
        <end position="35"/>
    </location>
</feature>
<feature type="transmembrane region" description="Helical" evidence="4">
    <location>
        <begin position="36"/>
        <end position="56"/>
    </location>
</feature>
<feature type="topological domain" description="Cytoplasmic" evidence="10">
    <location>
        <begin position="57"/>
        <end position="79"/>
    </location>
</feature>
<feature type="transmembrane region" description="Helical" evidence="4">
    <location>
        <begin position="80"/>
        <end position="100"/>
    </location>
</feature>
<feature type="topological domain" description="Lumenal" evidence="10">
    <location>
        <begin position="101"/>
        <end position="544"/>
    </location>
</feature>
<feature type="transmembrane region" description="Helical" evidence="4">
    <location>
        <begin position="545"/>
        <end position="565"/>
    </location>
</feature>
<feature type="topological domain" description="Cytoplasmic" evidence="10">
    <location>
        <begin position="566"/>
        <end position="589"/>
    </location>
</feature>
<feature type="active site" description="Charge relay system" evidence="2">
    <location>
        <position position="268"/>
    </location>
</feature>
<feature type="active site" description="Charge relay system" evidence="2">
    <location>
        <position position="400"/>
    </location>
</feature>
<feature type="active site" description="Charge relay system" evidence="2">
    <location>
        <position position="476"/>
    </location>
</feature>
<feature type="active site" description="Proton donor" evidence="6">
    <location>
        <position position="574"/>
    </location>
</feature>
<feature type="glycosylation site" description="N-linked (GlcNAc...) asparagine" evidence="5">
    <location>
        <position position="256"/>
    </location>
</feature>
<feature type="glycosylation site" description="N-linked (GlcNAc...) asparagine" evidence="5">
    <location>
        <position position="332"/>
    </location>
</feature>
<reference key="1">
    <citation type="submission" date="2012-09" db="EMBL/GenBank/DDBJ databases">
        <title>Cloning and expression analysis of PgHMGR2 gene in Panax ginseng.</title>
        <authorList>
            <person name="Luo H."/>
            <person name="Chen S."/>
        </authorList>
    </citation>
    <scope>NUCLEOTIDE SEQUENCE [MRNA]</scope>
</reference>
<reference key="2">
    <citation type="journal article" date="2018" name="Biotechnol. Appl. Biochem.">
        <title>Advances in ginsenoside biosynthesis and metabolic regulation.</title>
        <authorList>
            <person name="Lu J."/>
            <person name="Li J."/>
            <person name="Wang S."/>
            <person name="Yao L."/>
            <person name="Liang W."/>
            <person name="Wang J."/>
            <person name="Gao W."/>
        </authorList>
    </citation>
    <scope>REVIEW</scope>
</reference>
<reference key="3">
    <citation type="journal article" date="2018" name="Molecules">
        <title>Progress on the studies of the key enzymes of ginsenoside biosynthesis.</title>
        <authorList>
            <person name="Yang J.-L."/>
            <person name="Hu Z.-F."/>
            <person name="Zhang T.-T."/>
            <person name="Gu A.-D."/>
            <person name="Gong T."/>
            <person name="Zhu P."/>
        </authorList>
    </citation>
    <scope>REVIEW</scope>
    <scope>NOMENCLATURE</scope>
</reference>
<dbReference type="EC" id="1.1.1.34" evidence="6"/>
<dbReference type="EMBL" id="JX648390">
    <property type="protein sequence ID" value="AGL08682.1"/>
    <property type="molecule type" value="mRNA"/>
</dbReference>
<dbReference type="SMR" id="U5JCC6"/>
<dbReference type="GlyCosmos" id="U5JCC6">
    <property type="glycosylation" value="2 sites, No reported glycans"/>
</dbReference>
<dbReference type="UniPathway" id="UPA00058">
    <property type="reaction ID" value="UER00103"/>
</dbReference>
<dbReference type="GO" id="GO:0005789">
    <property type="term" value="C:endoplasmic reticulum membrane"/>
    <property type="evidence" value="ECO:0007669"/>
    <property type="project" value="UniProtKB-SubCell"/>
</dbReference>
<dbReference type="GO" id="GO:0005778">
    <property type="term" value="C:peroxisomal membrane"/>
    <property type="evidence" value="ECO:0007669"/>
    <property type="project" value="TreeGrafter"/>
</dbReference>
<dbReference type="GO" id="GO:0004420">
    <property type="term" value="F:hydroxymethylglutaryl-CoA reductase (NADPH) activity"/>
    <property type="evidence" value="ECO:0007669"/>
    <property type="project" value="UniProtKB-EC"/>
</dbReference>
<dbReference type="GO" id="GO:0015936">
    <property type="term" value="P:coenzyme A metabolic process"/>
    <property type="evidence" value="ECO:0007669"/>
    <property type="project" value="InterPro"/>
</dbReference>
<dbReference type="GO" id="GO:0008299">
    <property type="term" value="P:isoprenoid biosynthetic process"/>
    <property type="evidence" value="ECO:0007669"/>
    <property type="project" value="UniProtKB-KW"/>
</dbReference>
<dbReference type="GO" id="GO:0016126">
    <property type="term" value="P:sterol biosynthetic process"/>
    <property type="evidence" value="ECO:0007669"/>
    <property type="project" value="TreeGrafter"/>
</dbReference>
<dbReference type="CDD" id="cd00643">
    <property type="entry name" value="HMG-CoA_reductase_classI"/>
    <property type="match status" value="1"/>
</dbReference>
<dbReference type="FunFam" id="1.10.3270.10:FF:000002">
    <property type="entry name" value="3-hydroxy-3-methylglutaryl coenzyme A reductase"/>
    <property type="match status" value="1"/>
</dbReference>
<dbReference type="FunFam" id="3.30.70.420:FF:000001">
    <property type="entry name" value="3-hydroxy-3-methylglutaryl coenzyme A reductase"/>
    <property type="match status" value="1"/>
</dbReference>
<dbReference type="FunFam" id="3.90.770.10:FF:000001">
    <property type="entry name" value="3-hydroxy-3-methylglutaryl coenzyme A reductase"/>
    <property type="match status" value="1"/>
</dbReference>
<dbReference type="Gene3D" id="3.90.770.10">
    <property type="entry name" value="3-hydroxy-3-methylglutaryl-coenzyme A Reductase, Chain A, domain 2"/>
    <property type="match status" value="1"/>
</dbReference>
<dbReference type="Gene3D" id="1.10.3270.10">
    <property type="entry name" value="HMGR, N-terminal domain"/>
    <property type="match status" value="1"/>
</dbReference>
<dbReference type="Gene3D" id="3.30.70.420">
    <property type="entry name" value="Hydroxymethylglutaryl-CoA reductase, class I/II, NAD/NADP-binding domain"/>
    <property type="match status" value="1"/>
</dbReference>
<dbReference type="InterPro" id="IPR002202">
    <property type="entry name" value="HMG_CoA_Rdtase"/>
</dbReference>
<dbReference type="InterPro" id="IPR023074">
    <property type="entry name" value="HMG_CoA_Rdtase_cat_sf"/>
</dbReference>
<dbReference type="InterPro" id="IPR023076">
    <property type="entry name" value="HMG_CoA_Rdtase_CS"/>
</dbReference>
<dbReference type="InterPro" id="IPR004554">
    <property type="entry name" value="HMG_CoA_Rdtase_eu_arc"/>
</dbReference>
<dbReference type="InterPro" id="IPR023282">
    <property type="entry name" value="HMG_CoA_Rdtase_N"/>
</dbReference>
<dbReference type="InterPro" id="IPR009023">
    <property type="entry name" value="HMG_CoA_Rdtase_NAD(P)-bd_sf"/>
</dbReference>
<dbReference type="InterPro" id="IPR009029">
    <property type="entry name" value="HMG_CoA_Rdtase_sub-bd_dom_sf"/>
</dbReference>
<dbReference type="NCBIfam" id="TIGR00533">
    <property type="entry name" value="HMG_CoA_R_NADP"/>
    <property type="match status" value="1"/>
</dbReference>
<dbReference type="PANTHER" id="PTHR10572">
    <property type="entry name" value="3-HYDROXY-3-METHYLGLUTARYL-COENZYME A REDUCTASE"/>
    <property type="match status" value="1"/>
</dbReference>
<dbReference type="PANTHER" id="PTHR10572:SF24">
    <property type="entry name" value="3-HYDROXY-3-METHYLGLUTARYL-COENZYME A REDUCTASE"/>
    <property type="match status" value="1"/>
</dbReference>
<dbReference type="Pfam" id="PF00368">
    <property type="entry name" value="HMG-CoA_red"/>
    <property type="match status" value="1"/>
</dbReference>
<dbReference type="PRINTS" id="PR00071">
    <property type="entry name" value="HMGCOARDTASE"/>
</dbReference>
<dbReference type="SUPFAM" id="SSF55035">
    <property type="entry name" value="NAD-binding domain of HMG-CoA reductase"/>
    <property type="match status" value="1"/>
</dbReference>
<dbReference type="SUPFAM" id="SSF56542">
    <property type="entry name" value="Substrate-binding domain of HMG-CoA reductase"/>
    <property type="match status" value="1"/>
</dbReference>
<dbReference type="PROSITE" id="PS00066">
    <property type="entry name" value="HMG_COA_REDUCTASE_1"/>
    <property type="match status" value="1"/>
</dbReference>
<dbReference type="PROSITE" id="PS00318">
    <property type="entry name" value="HMG_COA_REDUCTASE_2"/>
    <property type="match status" value="1"/>
</dbReference>
<dbReference type="PROSITE" id="PS01192">
    <property type="entry name" value="HMG_COA_REDUCTASE_3"/>
    <property type="match status" value="1"/>
</dbReference>
<dbReference type="PROSITE" id="PS50065">
    <property type="entry name" value="HMG_COA_REDUCTASE_4"/>
    <property type="match status" value="1"/>
</dbReference>
<name>HMR2B_PANGI</name>
<organism>
    <name type="scientific">Panax ginseng</name>
    <name type="common">Korean ginseng</name>
    <dbReference type="NCBI Taxonomy" id="4054"/>
    <lineage>
        <taxon>Eukaryota</taxon>
        <taxon>Viridiplantae</taxon>
        <taxon>Streptophyta</taxon>
        <taxon>Embryophyta</taxon>
        <taxon>Tracheophyta</taxon>
        <taxon>Spermatophyta</taxon>
        <taxon>Magnoliopsida</taxon>
        <taxon>eudicotyledons</taxon>
        <taxon>Gunneridae</taxon>
        <taxon>Pentapetalae</taxon>
        <taxon>asterids</taxon>
        <taxon>campanulids</taxon>
        <taxon>Apiales</taxon>
        <taxon>Araliaceae</taxon>
        <taxon>Panax</taxon>
    </lineage>
</organism>
<comment type="function">
    <text evidence="1 3 7">Catalyzes the synthesis of mevalonate, the specific precursor of all isoprenoid compounds present in plants (By similarity). Component of the triterpene saponins (e.g. ginsenosides or panaxosides) and phytosterols biosynthetic pathways (PubMed:29378087). Promotes triterpenes accumulation in roots (By similarity).</text>
</comment>
<comment type="catalytic activity">
    <reaction evidence="6">
        <text>(R)-mevalonate + 2 NADP(+) + CoA = (3S)-3-hydroxy-3-methylglutaryl-CoA + 2 NADPH + 2 H(+)</text>
        <dbReference type="Rhea" id="RHEA:15989"/>
        <dbReference type="ChEBI" id="CHEBI:15378"/>
        <dbReference type="ChEBI" id="CHEBI:36464"/>
        <dbReference type="ChEBI" id="CHEBI:43074"/>
        <dbReference type="ChEBI" id="CHEBI:57287"/>
        <dbReference type="ChEBI" id="CHEBI:57783"/>
        <dbReference type="ChEBI" id="CHEBI:58349"/>
        <dbReference type="EC" id="1.1.1.34"/>
    </reaction>
</comment>
<comment type="pathway">
    <text evidence="10">Metabolic intermediate biosynthesis; (R)-mevalonate biosynthesis; (R)-mevalonate from acetyl-CoA: step 3/3.</text>
</comment>
<comment type="subcellular location">
    <subcellularLocation>
        <location evidence="1">Endoplasmic reticulum membrane</location>
        <topology evidence="10">Multi-pass membrane protein</topology>
    </subcellularLocation>
</comment>
<comment type="similarity">
    <text evidence="10">Belongs to the HMG-CoA reductase family.</text>
</comment>